<accession>A9R398</accession>
<proteinExistence type="inferred from homology"/>
<comment type="catalytic activity">
    <reaction evidence="1">
        <text>(S)-2,3,4,5-tetrahydrodipicolinate + succinyl-CoA + H2O = (S)-2-succinylamino-6-oxoheptanedioate + CoA</text>
        <dbReference type="Rhea" id="RHEA:17325"/>
        <dbReference type="ChEBI" id="CHEBI:15377"/>
        <dbReference type="ChEBI" id="CHEBI:15685"/>
        <dbReference type="ChEBI" id="CHEBI:16845"/>
        <dbReference type="ChEBI" id="CHEBI:57287"/>
        <dbReference type="ChEBI" id="CHEBI:57292"/>
        <dbReference type="EC" id="2.3.1.117"/>
    </reaction>
</comment>
<comment type="pathway">
    <text evidence="1">Amino-acid biosynthesis; L-lysine biosynthesis via DAP pathway; LL-2,6-diaminopimelate from (S)-tetrahydrodipicolinate (succinylase route): step 1/3.</text>
</comment>
<comment type="subcellular location">
    <subcellularLocation>
        <location evidence="1">Cytoplasm</location>
    </subcellularLocation>
</comment>
<comment type="similarity">
    <text evidence="1">Belongs to the transferase hexapeptide repeat family.</text>
</comment>
<sequence>MQQLQNVIETAFERRADITPANVDTVTREAITHVIDLLDTGALRVAEKIDGQWVTHQWLKKAVLLSFRINDNQVMEGAETRYYDKVPMKFAGYDEARFQREGFRVVPPATVRKGAFIARNTVLMPSYVNIGAFVDEGTMVDTWATVGSCAQIGKNVHLSGGVGIGGVLEPLQANPTIIEDNCFVGARSEVVEGVIVEEGSVISMGVFIGQSTRIYDRETGEVHYGRVPAGSVVVSGNLPSKDGSYSLYCAVIVKKVDAKTRSKVGINELLRTID</sequence>
<evidence type="ECO:0000255" key="1">
    <source>
        <dbReference type="HAMAP-Rule" id="MF_00811"/>
    </source>
</evidence>
<reference key="1">
    <citation type="journal article" date="2010" name="J. Bacteriol.">
        <title>Genome sequence of the deep-rooted Yersinia pestis strain Angola reveals new insights into the evolution and pangenome of the plague bacterium.</title>
        <authorList>
            <person name="Eppinger M."/>
            <person name="Worsham P.L."/>
            <person name="Nikolich M.P."/>
            <person name="Riley D.R."/>
            <person name="Sebastian Y."/>
            <person name="Mou S."/>
            <person name="Achtman M."/>
            <person name="Lindler L.E."/>
            <person name="Ravel J."/>
        </authorList>
    </citation>
    <scope>NUCLEOTIDE SEQUENCE [LARGE SCALE GENOMIC DNA]</scope>
    <source>
        <strain>Angola</strain>
    </source>
</reference>
<name>DAPD_YERPG</name>
<protein>
    <recommendedName>
        <fullName evidence="1">2,3,4,5-tetrahydropyridine-2,6-dicarboxylate N-succinyltransferase</fullName>
        <ecNumber evidence="1">2.3.1.117</ecNumber>
    </recommendedName>
    <alternativeName>
        <fullName evidence="1">Tetrahydrodipicolinate N-succinyltransferase</fullName>
        <shortName evidence="1">THP succinyltransferase</shortName>
        <shortName evidence="1">Tetrahydropicolinate succinylase</shortName>
    </alternativeName>
</protein>
<keyword id="KW-0012">Acyltransferase</keyword>
<keyword id="KW-0028">Amino-acid biosynthesis</keyword>
<keyword id="KW-0963">Cytoplasm</keyword>
<keyword id="KW-0220">Diaminopimelate biosynthesis</keyword>
<keyword id="KW-0457">Lysine biosynthesis</keyword>
<keyword id="KW-0677">Repeat</keyword>
<keyword id="KW-0808">Transferase</keyword>
<gene>
    <name evidence="1" type="primary">dapD</name>
    <name type="ordered locus">YpAngola_A3438</name>
</gene>
<feature type="chain" id="PRO_1000134073" description="2,3,4,5-tetrahydropyridine-2,6-dicarboxylate N-succinyltransferase">
    <location>
        <begin position="1"/>
        <end position="274"/>
    </location>
</feature>
<dbReference type="EC" id="2.3.1.117" evidence="1"/>
<dbReference type="EMBL" id="CP000901">
    <property type="protein sequence ID" value="ABX85348.1"/>
    <property type="molecule type" value="Genomic_DNA"/>
</dbReference>
<dbReference type="RefSeq" id="WP_002212128.1">
    <property type="nucleotide sequence ID" value="NZ_CP009935.1"/>
</dbReference>
<dbReference type="SMR" id="A9R398"/>
<dbReference type="GeneID" id="96662373"/>
<dbReference type="KEGG" id="ypg:YpAngola_A3438"/>
<dbReference type="PATRIC" id="fig|349746.12.peg.134"/>
<dbReference type="UniPathway" id="UPA00034">
    <property type="reaction ID" value="UER00019"/>
</dbReference>
<dbReference type="GO" id="GO:0005737">
    <property type="term" value="C:cytoplasm"/>
    <property type="evidence" value="ECO:0007669"/>
    <property type="project" value="UniProtKB-SubCell"/>
</dbReference>
<dbReference type="GO" id="GO:0008666">
    <property type="term" value="F:2,3,4,5-tetrahydropyridine-2,6-dicarboxylate N-succinyltransferase activity"/>
    <property type="evidence" value="ECO:0007669"/>
    <property type="project" value="UniProtKB-UniRule"/>
</dbReference>
<dbReference type="GO" id="GO:0016779">
    <property type="term" value="F:nucleotidyltransferase activity"/>
    <property type="evidence" value="ECO:0007669"/>
    <property type="project" value="TreeGrafter"/>
</dbReference>
<dbReference type="GO" id="GO:0019877">
    <property type="term" value="P:diaminopimelate biosynthetic process"/>
    <property type="evidence" value="ECO:0007669"/>
    <property type="project" value="UniProtKB-UniRule"/>
</dbReference>
<dbReference type="GO" id="GO:0009089">
    <property type="term" value="P:lysine biosynthetic process via diaminopimelate"/>
    <property type="evidence" value="ECO:0007669"/>
    <property type="project" value="UniProtKB-UniRule"/>
</dbReference>
<dbReference type="CDD" id="cd03350">
    <property type="entry name" value="LbH_THP_succinylT"/>
    <property type="match status" value="1"/>
</dbReference>
<dbReference type="FunFam" id="2.160.10.10:FF:000004">
    <property type="entry name" value="2,3,4,5-tetrahydropyridine-2,6-dicarboxylate N-succinyltransferase"/>
    <property type="match status" value="1"/>
</dbReference>
<dbReference type="Gene3D" id="2.160.10.10">
    <property type="entry name" value="Hexapeptide repeat proteins"/>
    <property type="match status" value="1"/>
</dbReference>
<dbReference type="Gene3D" id="1.10.166.10">
    <property type="entry name" value="Tetrahydrodipicolinate-N-succinyltransferase, N-terminal domain"/>
    <property type="match status" value="1"/>
</dbReference>
<dbReference type="HAMAP" id="MF_00811">
    <property type="entry name" value="DapD"/>
    <property type="match status" value="1"/>
</dbReference>
<dbReference type="InterPro" id="IPR005664">
    <property type="entry name" value="DapD_Trfase_Hexpep_rpt_fam"/>
</dbReference>
<dbReference type="InterPro" id="IPR001451">
    <property type="entry name" value="Hexapep"/>
</dbReference>
<dbReference type="InterPro" id="IPR018357">
    <property type="entry name" value="Hexapep_transf_CS"/>
</dbReference>
<dbReference type="InterPro" id="IPR023180">
    <property type="entry name" value="THP_succinylTrfase_dom1"/>
</dbReference>
<dbReference type="InterPro" id="IPR037133">
    <property type="entry name" value="THP_succinylTrfase_N_sf"/>
</dbReference>
<dbReference type="InterPro" id="IPR011004">
    <property type="entry name" value="Trimer_LpxA-like_sf"/>
</dbReference>
<dbReference type="NCBIfam" id="TIGR00965">
    <property type="entry name" value="dapD"/>
    <property type="match status" value="1"/>
</dbReference>
<dbReference type="NCBIfam" id="NF008808">
    <property type="entry name" value="PRK11830.1"/>
    <property type="match status" value="1"/>
</dbReference>
<dbReference type="PANTHER" id="PTHR19136:SF52">
    <property type="entry name" value="2,3,4,5-TETRAHYDROPYRIDINE-2,6-DICARBOXYLATE N-SUCCINYLTRANSFERASE"/>
    <property type="match status" value="1"/>
</dbReference>
<dbReference type="PANTHER" id="PTHR19136">
    <property type="entry name" value="MOLYBDENUM COFACTOR GUANYLYLTRANSFERASE"/>
    <property type="match status" value="1"/>
</dbReference>
<dbReference type="Pfam" id="PF14602">
    <property type="entry name" value="Hexapep_2"/>
    <property type="match status" value="1"/>
</dbReference>
<dbReference type="Pfam" id="PF14805">
    <property type="entry name" value="THDPS_N_2"/>
    <property type="match status" value="1"/>
</dbReference>
<dbReference type="SUPFAM" id="SSF51161">
    <property type="entry name" value="Trimeric LpxA-like enzymes"/>
    <property type="match status" value="1"/>
</dbReference>
<dbReference type="PROSITE" id="PS00101">
    <property type="entry name" value="HEXAPEP_TRANSFERASES"/>
    <property type="match status" value="1"/>
</dbReference>
<organism>
    <name type="scientific">Yersinia pestis bv. Antiqua (strain Angola)</name>
    <dbReference type="NCBI Taxonomy" id="349746"/>
    <lineage>
        <taxon>Bacteria</taxon>
        <taxon>Pseudomonadati</taxon>
        <taxon>Pseudomonadota</taxon>
        <taxon>Gammaproteobacteria</taxon>
        <taxon>Enterobacterales</taxon>
        <taxon>Yersiniaceae</taxon>
        <taxon>Yersinia</taxon>
    </lineage>
</organism>